<protein>
    <recommendedName>
        <fullName>CRISPR-associated nuclease/helicase Cas3</fullName>
        <ecNumber>3.1.-.-</ecNumber>
        <ecNumber>3.6.4.-</ecNumber>
    </recommendedName>
</protein>
<comment type="function">
    <text evidence="5">CRISPR (clustered regularly interspaced short palindromic repeat), is an adaptive immune system that provides protection against mobile genetic elements (viruses, transposable elements and conjugative plasmids). CRISPR clusters contain sequences complementary to antecedent mobile elements and target invading nucleic acids. CRISPR clusters are transcribed and processed into CRISPR RNA (crRNA). Cas3 plus Cascade participate in CRISPR interference, the third stage of CRISPR immunity. Functions as a ssDNA-dependent ATPase; dsDNA, ssRNA do not stimulate ATPase activity, while other nucleotides (aside from dATP) are not hydrolyzed. Functions as a ssDNA nuclease; activity does not require ATP. Functions as an ATP-dependent helicase; helicase activity requires hydrolysable ATP. Unwinds both DNA/DNA hybrids and RNA/DNA hybrids, moving mostly in a 3' to 5' direction.</text>
</comment>
<comment type="cofactor">
    <cofactor>
        <name>Mn(2+)</name>
        <dbReference type="ChEBI" id="CHEBI:29035"/>
    </cofactor>
    <cofactor>
        <name>Mg(2+)</name>
        <dbReference type="ChEBI" id="CHEBI:18420"/>
    </cofactor>
    <cofactor>
        <name>Ca(2+)</name>
        <dbReference type="ChEBI" id="CHEBI:29108"/>
    </cofactor>
    <text>Mn(2+) or Mg(2+) or Ca(2+). ATPase and nuclease activities are dependent on divalent cations, for ATPase Mn(2+) is marginally preferred over Mg(2+) or Ca(2+).</text>
</comment>
<comment type="activity regulation">
    <text evidence="5">Nuclease activity is inhibited by EDTA.</text>
</comment>
<comment type="domain">
    <text>Proteins of this family have an N-terminal nuclease domain and a C-terminal helicase/ATPase domain. In some CRISPR/Cas systems the domains are swapped, in others they are encoded separately.</text>
</comment>
<comment type="miscellaneous">
    <text>Found in the E.coli-type CRISPR4/cas system.</text>
</comment>
<comment type="similarity">
    <text evidence="6">In the N-terminal section; belongs to the CRISPR-associated nuclease Cas3-HD family.</text>
</comment>
<comment type="similarity">
    <text evidence="6">In the central section; belongs to the CRISPR-associated helicase Cas3 family.</text>
</comment>
<reference key="1">
    <citation type="journal article" date="2011" name="EMBO J.">
        <title>Cas3 is a single-stranded DNA nuclease and ATP-dependent helicase in the CRISPR/Cas immune system.</title>
        <authorList>
            <person name="Sinkunas T."/>
            <person name="Gasiunas G."/>
            <person name="Fremaux C."/>
            <person name="Barrangou R."/>
            <person name="Horvath P."/>
            <person name="Siksnys V."/>
        </authorList>
    </citation>
    <scope>NUCLEOTIDE SEQUENCE [GENOMIC DNA]</scope>
    <scope>FUNCTION AS AN ATPASE</scope>
    <scope>FUNCTION AS A NUCLEASE</scope>
    <scope>FUNCTION AS A HELICASE</scope>
    <scope>ACTIVITY REGULATION</scope>
    <scope>MUTAGENESIS OF ASP-77; ASP-227; GLN-290; LYS-316; ASP-452; GLU-453; ARG-663 AND ARG-666</scope>
    <source>
        <strain>DGCC7710</strain>
    </source>
</reference>
<gene>
    <name type="primary">cas3</name>
</gene>
<feature type="chain" id="PRO_0000417607" description="CRISPR-associated nuclease/helicase Cas3">
    <location>
        <begin position="1"/>
        <end position="926"/>
    </location>
</feature>
<feature type="domain" description="HD Cas3-type" evidence="4">
    <location>
        <begin position="17"/>
        <end position="229"/>
    </location>
</feature>
<feature type="domain" description="Helicase ATP-binding" evidence="2">
    <location>
        <begin position="297"/>
        <end position="504"/>
    </location>
</feature>
<feature type="domain" description="Helicase C-terminal" evidence="3">
    <location>
        <begin position="551"/>
        <end position="745"/>
    </location>
</feature>
<feature type="short sequence motif" description="DEAH box">
    <location>
        <begin position="452"/>
        <end position="455"/>
    </location>
</feature>
<feature type="binding site" evidence="1">
    <location>
        <position position="77"/>
    </location>
    <ligand>
        <name>Mg(2+)</name>
        <dbReference type="ChEBI" id="CHEBI:18420"/>
    </ligand>
</feature>
<feature type="binding site" evidence="1">
    <location>
        <position position="150"/>
    </location>
    <ligand>
        <name>Mg(2+)</name>
        <dbReference type="ChEBI" id="CHEBI:18420"/>
    </ligand>
</feature>
<feature type="binding site" evidence="2">
    <location>
        <begin position="310"/>
        <end position="317"/>
    </location>
    <ligand>
        <name>ATP</name>
        <dbReference type="ChEBI" id="CHEBI:30616"/>
    </ligand>
</feature>
<feature type="mutagenesis site" description="Loss of ssDNA nuclease activity, no effect on helicase activity." evidence="5">
    <original>D</original>
    <variation>A</variation>
    <location>
        <position position="77"/>
    </location>
</feature>
<feature type="mutagenesis site" description="Loss of ssDNA nuclease activity." evidence="5">
    <original>D</original>
    <variation>A</variation>
    <location>
        <position position="227"/>
    </location>
</feature>
<feature type="mutagenesis site" description="Loss of ssDNA-dependent ATPase." evidence="5">
    <original>Q</original>
    <variation>A</variation>
    <location>
        <position position="290"/>
    </location>
</feature>
<feature type="mutagenesis site" description="Loss of ssDNA-dependent ATPase." evidence="5">
    <original>K</original>
    <variation>A</variation>
    <location>
        <position position="316"/>
    </location>
</feature>
<feature type="mutagenesis site" description="Loss of ssDNA-dependent ATPase, loss of helicase activity." evidence="5">
    <original>D</original>
    <variation>A</variation>
    <location>
        <position position="452"/>
    </location>
</feature>
<feature type="mutagenesis site" description="Loss of ssDNA-dependent ATPase." evidence="5">
    <original>E</original>
    <variation>A</variation>
    <location>
        <position position="453"/>
    </location>
</feature>
<feature type="mutagenesis site" description="Loss of ssDNA-dependent ATPase." evidence="5">
    <original>R</original>
    <variation>A</variation>
    <location>
        <position position="663"/>
    </location>
</feature>
<feature type="mutagenesis site" description="Loss of ssDNA-dependent ATPase." evidence="5">
    <original>R</original>
    <variation>A</variation>
    <location>
        <position position="666"/>
    </location>
</feature>
<name>CAS3_STRTR</name>
<sequence>MKHINDYFWAKKTEENSRLLWLPLTQHLEDTKNIAGLLWEHWLSEGQKVLIENSINVKSNIENQGKRLAQFLGAVHDIGKATPAFQTQKGYANSVDLDIQLLEKLERAGFSGISSLQLASPKKSHHSIAGQYLLSHYGVDEDIATIIGGHHGRPVDDLDGLNSQKSYPSNYYQDEKKDSLVYQKWKSNQEAFLNWALTETGFNSVSQLPKIKQPAQVILSGLLIMSDWIASNEHFFPLLSLDETDVKNKSQRIETGFKKWKKSNLWQPETFVDLVTLYQERFGFSPRNFQLILSQTIEKTTNPGIVILEAPMGIGKTEAALAVSEQLSSKKGCSGLFFGLPTQATSNGIFKRIEQWTENIKGNNSDHFSIQLVHGKAALNTDFIELLKGNTINMDDSENGSIFVNEWFSGRKTSALDDFVVGTVDQFLMVALKQKHLALRHLGFSKKVIVIDEVHAYDAYMSQYLLEAIRWMGAYGVPVIILSATLPAQQREKLIKSYMAGMGVKWRDIENIDQIKIDAYPLITYNDGPDIHQVKMFEKQEQKNIYIHRLPEEQLFDIVKEGLDNGGVVGIIVNTVRKSQELARNFSDIFGDDMVDLLHSNFIATERIRKEKDLLQEIGKKAIRPPKKIIIGTQVLEQSLDIDFDVLISDLAPMDLLIQRIGRLHRHKIKRPQKHEVARFYVLGTFEEFDFDEGTRLVYGDYLLARTQYFLPDKIRLPDDISPLVQKVYNSDLTITFPKPELHKKYLDAKIEHDDKIKNKETKAKSYRIANPVLKKSRVRTNSLIGWLKNLHPNDSEEKAYAQVRDIEDTVEVIALKKISDGYGLFIENKDISQNITDPIIAKKVAQNTLRLPMSLSKAYNIDQTINELERYNNSHLSQWQNSSWLKGSLGIIFDKNNEFILNGFKLLYDEKYGVTIERLDKNESV</sequence>
<accession>F2XG53</accession>
<organism>
    <name type="scientific">Streptococcus thermophilus</name>
    <dbReference type="NCBI Taxonomy" id="1308"/>
    <lineage>
        <taxon>Bacteria</taxon>
        <taxon>Bacillati</taxon>
        <taxon>Bacillota</taxon>
        <taxon>Bacilli</taxon>
        <taxon>Lactobacillales</taxon>
        <taxon>Streptococcaceae</taxon>
        <taxon>Streptococcus</taxon>
    </lineage>
</organism>
<proteinExistence type="evidence at protein level"/>
<evidence type="ECO:0000250" key="1"/>
<evidence type="ECO:0000255" key="2">
    <source>
        <dbReference type="PROSITE-ProRule" id="PRU00541"/>
    </source>
</evidence>
<evidence type="ECO:0000255" key="3">
    <source>
        <dbReference type="PROSITE-ProRule" id="PRU00542"/>
    </source>
</evidence>
<evidence type="ECO:0000255" key="4">
    <source>
        <dbReference type="PROSITE-ProRule" id="PRU00974"/>
    </source>
</evidence>
<evidence type="ECO:0000269" key="5">
    <source>
    </source>
</evidence>
<evidence type="ECO:0000305" key="6"/>
<keyword id="KW-0051">Antiviral defense</keyword>
<keyword id="KW-0067">ATP-binding</keyword>
<keyword id="KW-0347">Helicase</keyword>
<keyword id="KW-0378">Hydrolase</keyword>
<keyword id="KW-0460">Magnesium</keyword>
<keyword id="KW-0479">Metal-binding</keyword>
<keyword id="KW-0540">Nuclease</keyword>
<keyword id="KW-0547">Nucleotide-binding</keyword>
<dbReference type="EC" id="3.1.-.-"/>
<dbReference type="EC" id="3.6.4.-"/>
<dbReference type="EMBL" id="HQ453272">
    <property type="protein sequence ID" value="ADV90802.1"/>
    <property type="molecule type" value="Genomic_DNA"/>
</dbReference>
<dbReference type="RefSeq" id="WP_037623090.1">
    <property type="nucleotide sequence ID" value="NZ_QFLC01000003.1"/>
</dbReference>
<dbReference type="SMR" id="F2XG53"/>
<dbReference type="GO" id="GO:0005524">
    <property type="term" value="F:ATP binding"/>
    <property type="evidence" value="ECO:0007669"/>
    <property type="project" value="UniProtKB-KW"/>
</dbReference>
<dbReference type="GO" id="GO:0004536">
    <property type="term" value="F:DNA nuclease activity"/>
    <property type="evidence" value="ECO:0000314"/>
    <property type="project" value="CACAO"/>
</dbReference>
<dbReference type="GO" id="GO:0046872">
    <property type="term" value="F:metal ion binding"/>
    <property type="evidence" value="ECO:0007669"/>
    <property type="project" value="UniProtKB-KW"/>
</dbReference>
<dbReference type="GO" id="GO:0003723">
    <property type="term" value="F:RNA binding"/>
    <property type="evidence" value="ECO:0007669"/>
    <property type="project" value="TreeGrafter"/>
</dbReference>
<dbReference type="GO" id="GO:0003724">
    <property type="term" value="F:RNA helicase activity"/>
    <property type="evidence" value="ECO:0007669"/>
    <property type="project" value="TreeGrafter"/>
</dbReference>
<dbReference type="GO" id="GO:0051607">
    <property type="term" value="P:defense response to virus"/>
    <property type="evidence" value="ECO:0007669"/>
    <property type="project" value="UniProtKB-KW"/>
</dbReference>
<dbReference type="CDD" id="cd09641">
    <property type="entry name" value="Cas3''_I"/>
    <property type="match status" value="1"/>
</dbReference>
<dbReference type="CDD" id="cd17930">
    <property type="entry name" value="DEXHc_cas3"/>
    <property type="match status" value="1"/>
</dbReference>
<dbReference type="Gene3D" id="1.10.3210.30">
    <property type="match status" value="1"/>
</dbReference>
<dbReference type="Gene3D" id="3.40.50.300">
    <property type="entry name" value="P-loop containing nucleotide triphosphate hydrolases"/>
    <property type="match status" value="2"/>
</dbReference>
<dbReference type="InterPro" id="IPR054712">
    <property type="entry name" value="Cas3-like_dom"/>
</dbReference>
<dbReference type="InterPro" id="IPR041372">
    <property type="entry name" value="Cas3_C"/>
</dbReference>
<dbReference type="InterPro" id="IPR006483">
    <property type="entry name" value="CRISPR-assoc_Cas3_HD"/>
</dbReference>
<dbReference type="InterPro" id="IPR038257">
    <property type="entry name" value="CRISPR-assoc_Cas3_HD_sf"/>
</dbReference>
<dbReference type="InterPro" id="IPR011545">
    <property type="entry name" value="DEAD/DEAH_box_helicase_dom"/>
</dbReference>
<dbReference type="InterPro" id="IPR050547">
    <property type="entry name" value="DEAD_box_RNA_helicases"/>
</dbReference>
<dbReference type="InterPro" id="IPR014001">
    <property type="entry name" value="Helicase_ATP-bd"/>
</dbReference>
<dbReference type="InterPro" id="IPR001650">
    <property type="entry name" value="Helicase_C-like"/>
</dbReference>
<dbReference type="InterPro" id="IPR006474">
    <property type="entry name" value="Helicase_Cas3_CRISPR-ass_core"/>
</dbReference>
<dbReference type="InterPro" id="IPR027417">
    <property type="entry name" value="P-loop_NTPase"/>
</dbReference>
<dbReference type="NCBIfam" id="TIGR01587">
    <property type="entry name" value="cas3_core"/>
    <property type="match status" value="1"/>
</dbReference>
<dbReference type="NCBIfam" id="TIGR01596">
    <property type="entry name" value="cas3_HD"/>
    <property type="match status" value="1"/>
</dbReference>
<dbReference type="PANTHER" id="PTHR47963:SF9">
    <property type="entry name" value="CRISPR-ASSOCIATED ENDONUCLEASE_HELICASE CAS3"/>
    <property type="match status" value="1"/>
</dbReference>
<dbReference type="PANTHER" id="PTHR47963">
    <property type="entry name" value="DEAD-BOX ATP-DEPENDENT RNA HELICASE 47, MITOCHONDRIAL"/>
    <property type="match status" value="1"/>
</dbReference>
<dbReference type="Pfam" id="PF22590">
    <property type="entry name" value="Cas3-like_C_2"/>
    <property type="match status" value="1"/>
</dbReference>
<dbReference type="Pfam" id="PF18395">
    <property type="entry name" value="Cas3_C"/>
    <property type="match status" value="1"/>
</dbReference>
<dbReference type="Pfam" id="PF18019">
    <property type="entry name" value="Cas3_HD"/>
    <property type="match status" value="1"/>
</dbReference>
<dbReference type="Pfam" id="PF00270">
    <property type="entry name" value="DEAD"/>
    <property type="match status" value="1"/>
</dbReference>
<dbReference type="SMART" id="SM00487">
    <property type="entry name" value="DEXDc"/>
    <property type="match status" value="1"/>
</dbReference>
<dbReference type="SMART" id="SM00490">
    <property type="entry name" value="HELICc"/>
    <property type="match status" value="1"/>
</dbReference>
<dbReference type="SUPFAM" id="SSF52540">
    <property type="entry name" value="P-loop containing nucleoside triphosphate hydrolases"/>
    <property type="match status" value="1"/>
</dbReference>
<dbReference type="PROSITE" id="PS51643">
    <property type="entry name" value="HD_CAS3"/>
    <property type="match status" value="1"/>
</dbReference>
<dbReference type="PROSITE" id="PS51192">
    <property type="entry name" value="HELICASE_ATP_BIND_1"/>
    <property type="match status" value="1"/>
</dbReference>
<dbReference type="PROSITE" id="PS51194">
    <property type="entry name" value="HELICASE_CTER"/>
    <property type="match status" value="1"/>
</dbReference>